<gene>
    <name evidence="1" type="primary">azoR</name>
    <name type="ordered locus">Franean1_6004</name>
</gene>
<accession>A8LAY7</accession>
<name>AZOR_PARS2</name>
<dbReference type="EC" id="1.6.5.-" evidence="1"/>
<dbReference type="EC" id="1.7.1.17" evidence="1"/>
<dbReference type="EMBL" id="CP000820">
    <property type="protein sequence ID" value="ABW15348.1"/>
    <property type="molecule type" value="Genomic_DNA"/>
</dbReference>
<dbReference type="RefSeq" id="WP_020463444.1">
    <property type="nucleotide sequence ID" value="NC_009921.1"/>
</dbReference>
<dbReference type="SMR" id="A8LAY7"/>
<dbReference type="STRING" id="298653.Franean1_6004"/>
<dbReference type="KEGG" id="fre:Franean1_6004"/>
<dbReference type="eggNOG" id="COG1182">
    <property type="taxonomic scope" value="Bacteria"/>
</dbReference>
<dbReference type="HOGENOM" id="CLU_088964_0_1_11"/>
<dbReference type="GO" id="GO:0009055">
    <property type="term" value="F:electron transfer activity"/>
    <property type="evidence" value="ECO:0007669"/>
    <property type="project" value="UniProtKB-UniRule"/>
</dbReference>
<dbReference type="GO" id="GO:0010181">
    <property type="term" value="F:FMN binding"/>
    <property type="evidence" value="ECO:0007669"/>
    <property type="project" value="UniProtKB-UniRule"/>
</dbReference>
<dbReference type="GO" id="GO:0016652">
    <property type="term" value="F:oxidoreductase activity, acting on NAD(P)H as acceptor"/>
    <property type="evidence" value="ECO:0007669"/>
    <property type="project" value="UniProtKB-UniRule"/>
</dbReference>
<dbReference type="GO" id="GO:0016655">
    <property type="term" value="F:oxidoreductase activity, acting on NAD(P)H, quinone or similar compound as acceptor"/>
    <property type="evidence" value="ECO:0007669"/>
    <property type="project" value="InterPro"/>
</dbReference>
<dbReference type="Gene3D" id="3.40.50.360">
    <property type="match status" value="1"/>
</dbReference>
<dbReference type="HAMAP" id="MF_01216">
    <property type="entry name" value="Azoreductase_type1"/>
    <property type="match status" value="1"/>
</dbReference>
<dbReference type="InterPro" id="IPR003680">
    <property type="entry name" value="Flavodoxin_fold"/>
</dbReference>
<dbReference type="InterPro" id="IPR029039">
    <property type="entry name" value="Flavoprotein-like_sf"/>
</dbReference>
<dbReference type="InterPro" id="IPR050104">
    <property type="entry name" value="FMN-dep_NADH:Q_OxRdtase_AzoR1"/>
</dbReference>
<dbReference type="InterPro" id="IPR023048">
    <property type="entry name" value="NADH:quinone_OxRdtase_FMN_depd"/>
</dbReference>
<dbReference type="PANTHER" id="PTHR43741">
    <property type="entry name" value="FMN-DEPENDENT NADH-AZOREDUCTASE 1"/>
    <property type="match status" value="1"/>
</dbReference>
<dbReference type="PANTHER" id="PTHR43741:SF4">
    <property type="entry name" value="FMN-DEPENDENT NADH:QUINONE OXIDOREDUCTASE"/>
    <property type="match status" value="1"/>
</dbReference>
<dbReference type="Pfam" id="PF02525">
    <property type="entry name" value="Flavodoxin_2"/>
    <property type="match status" value="1"/>
</dbReference>
<dbReference type="SUPFAM" id="SSF52218">
    <property type="entry name" value="Flavoproteins"/>
    <property type="match status" value="1"/>
</dbReference>
<keyword id="KW-0285">Flavoprotein</keyword>
<keyword id="KW-0288">FMN</keyword>
<keyword id="KW-0520">NAD</keyword>
<keyword id="KW-0560">Oxidoreductase</keyword>
<proteinExistence type="inferred from homology"/>
<feature type="chain" id="PRO_1000138975" description="FMN-dependent NADH:quinone oxidoreductase">
    <location>
        <begin position="1"/>
        <end position="211"/>
    </location>
</feature>
<feature type="binding site" evidence="1">
    <location>
        <position position="10"/>
    </location>
    <ligand>
        <name>FMN</name>
        <dbReference type="ChEBI" id="CHEBI:58210"/>
    </ligand>
</feature>
<feature type="binding site" evidence="1">
    <location>
        <begin position="16"/>
        <end position="18"/>
    </location>
    <ligand>
        <name>FMN</name>
        <dbReference type="ChEBI" id="CHEBI:58210"/>
    </ligand>
</feature>
<comment type="function">
    <text evidence="1">Quinone reductase that provides resistance to thiol-specific stress caused by electrophilic quinones.</text>
</comment>
<comment type="function">
    <text evidence="1">Also exhibits azoreductase activity. Catalyzes the reductive cleavage of the azo bond in aromatic azo compounds to the corresponding amines.</text>
</comment>
<comment type="catalytic activity">
    <reaction evidence="1">
        <text>2 a quinone + NADH + H(+) = 2 a 1,4-benzosemiquinone + NAD(+)</text>
        <dbReference type="Rhea" id="RHEA:65952"/>
        <dbReference type="ChEBI" id="CHEBI:15378"/>
        <dbReference type="ChEBI" id="CHEBI:57540"/>
        <dbReference type="ChEBI" id="CHEBI:57945"/>
        <dbReference type="ChEBI" id="CHEBI:132124"/>
        <dbReference type="ChEBI" id="CHEBI:134225"/>
    </reaction>
</comment>
<comment type="catalytic activity">
    <reaction evidence="1">
        <text>N,N-dimethyl-1,4-phenylenediamine + anthranilate + 2 NAD(+) = 2-(4-dimethylaminophenyl)diazenylbenzoate + 2 NADH + 2 H(+)</text>
        <dbReference type="Rhea" id="RHEA:55872"/>
        <dbReference type="ChEBI" id="CHEBI:15378"/>
        <dbReference type="ChEBI" id="CHEBI:15783"/>
        <dbReference type="ChEBI" id="CHEBI:16567"/>
        <dbReference type="ChEBI" id="CHEBI:57540"/>
        <dbReference type="ChEBI" id="CHEBI:57945"/>
        <dbReference type="ChEBI" id="CHEBI:71579"/>
        <dbReference type="EC" id="1.7.1.17"/>
    </reaction>
</comment>
<comment type="cofactor">
    <cofactor evidence="1">
        <name>FMN</name>
        <dbReference type="ChEBI" id="CHEBI:58210"/>
    </cofactor>
    <text evidence="1">Binds 1 FMN per subunit.</text>
</comment>
<comment type="subunit">
    <text evidence="1">Homodimer.</text>
</comment>
<comment type="similarity">
    <text evidence="1">Belongs to the azoreductase type 1 family.</text>
</comment>
<organism>
    <name type="scientific">Parafrankia sp. (strain EAN1pec)</name>
    <dbReference type="NCBI Taxonomy" id="298653"/>
    <lineage>
        <taxon>Bacteria</taxon>
        <taxon>Bacillati</taxon>
        <taxon>Actinomycetota</taxon>
        <taxon>Actinomycetes</taxon>
        <taxon>Frankiales</taxon>
        <taxon>Frankiaceae</taxon>
        <taxon>Parafrankia</taxon>
    </lineage>
</organism>
<reference key="1">
    <citation type="journal article" date="2007" name="Genome Res.">
        <title>Genome characteristics of facultatively symbiotic Frankia sp. strains reflect host range and host plant biogeography.</title>
        <authorList>
            <person name="Normand P."/>
            <person name="Lapierre P."/>
            <person name="Tisa L.S."/>
            <person name="Gogarten J.P."/>
            <person name="Alloisio N."/>
            <person name="Bagnarol E."/>
            <person name="Bassi C.A."/>
            <person name="Berry A.M."/>
            <person name="Bickhart D.M."/>
            <person name="Choisne N."/>
            <person name="Couloux A."/>
            <person name="Cournoyer B."/>
            <person name="Cruveiller S."/>
            <person name="Daubin V."/>
            <person name="Demange N."/>
            <person name="Francino M.P."/>
            <person name="Goltsman E."/>
            <person name="Huang Y."/>
            <person name="Kopp O.R."/>
            <person name="Labarre L."/>
            <person name="Lapidus A."/>
            <person name="Lavire C."/>
            <person name="Marechal J."/>
            <person name="Martinez M."/>
            <person name="Mastronunzio J.E."/>
            <person name="Mullin B.C."/>
            <person name="Niemann J."/>
            <person name="Pujic P."/>
            <person name="Rawnsley T."/>
            <person name="Rouy Z."/>
            <person name="Schenowitz C."/>
            <person name="Sellstedt A."/>
            <person name="Tavares F."/>
            <person name="Tomkins J.P."/>
            <person name="Vallenet D."/>
            <person name="Valverde C."/>
            <person name="Wall L.G."/>
            <person name="Wang Y."/>
            <person name="Medigue C."/>
            <person name="Benson D.R."/>
        </authorList>
    </citation>
    <scope>NUCLEOTIDE SEQUENCE [LARGE SCALE GENOMIC DNA]</scope>
    <source>
        <strain>EAN1pec</strain>
    </source>
</reference>
<sequence>MPHLLHIDSSLAPEGSVSRGVAEAYAESWRKHHPDGTLTHRDLATSPPPHLNWALVSGGQTPPEQRTPEQAEAVKIREEYLEEVESADEYVISVPMYNYAYPSTIKAWLDQVIVMGRTAGGTAGDGVLAGRKVTVITAQGGSYAPGAPKEGWDHQVPYLRHAFEALGADNIEFITVVMTLSKVNPALAAFTDVFEASRTAAEQTARDRAAA</sequence>
<evidence type="ECO:0000255" key="1">
    <source>
        <dbReference type="HAMAP-Rule" id="MF_01216"/>
    </source>
</evidence>
<protein>
    <recommendedName>
        <fullName evidence="1">FMN-dependent NADH:quinone oxidoreductase</fullName>
        <ecNumber evidence="1">1.6.5.-</ecNumber>
    </recommendedName>
    <alternativeName>
        <fullName evidence="1">Azo-dye reductase</fullName>
    </alternativeName>
    <alternativeName>
        <fullName evidence="1">FMN-dependent NADH-azo compound oxidoreductase</fullName>
    </alternativeName>
    <alternativeName>
        <fullName evidence="1">FMN-dependent NADH-azoreductase</fullName>
        <ecNumber evidence="1">1.7.1.17</ecNumber>
    </alternativeName>
</protein>